<reference key="1">
    <citation type="journal article" date="2014" name="Stand. Genomic Sci.">
        <title>Complete genome sequence of Burkholderia phymatum STM815(T), a broad host range and efficient nitrogen-fixing symbiont of Mimosa species.</title>
        <authorList>
            <person name="Moulin L."/>
            <person name="Klonowska A."/>
            <person name="Caroline B."/>
            <person name="Booth K."/>
            <person name="Vriezen J.A."/>
            <person name="Melkonian R."/>
            <person name="James E.K."/>
            <person name="Young J.P."/>
            <person name="Bena G."/>
            <person name="Hauser L."/>
            <person name="Land M."/>
            <person name="Kyrpides N."/>
            <person name="Bruce D."/>
            <person name="Chain P."/>
            <person name="Copeland A."/>
            <person name="Pitluck S."/>
            <person name="Woyke T."/>
            <person name="Lizotte-Waniewski M."/>
            <person name="Bristow J."/>
            <person name="Riley M."/>
        </authorList>
    </citation>
    <scope>NUCLEOTIDE SEQUENCE [LARGE SCALE GENOMIC DNA]</scope>
    <source>
        <strain>DSM 17167 / CIP 108236 / LMG 21445 / STM815</strain>
    </source>
</reference>
<accession>B2JC45</accession>
<proteinExistence type="inferred from homology"/>
<protein>
    <recommendedName>
        <fullName evidence="1">Octanoyltransferase</fullName>
        <ecNumber evidence="1">2.3.1.181</ecNumber>
    </recommendedName>
    <alternativeName>
        <fullName evidence="1">Lipoate-protein ligase B</fullName>
    </alternativeName>
    <alternativeName>
        <fullName evidence="1">Lipoyl/octanoyl transferase</fullName>
    </alternativeName>
    <alternativeName>
        <fullName evidence="1">Octanoyl-[acyl-carrier-protein]-protein N-octanoyltransferase</fullName>
    </alternativeName>
</protein>
<comment type="function">
    <text evidence="1">Catalyzes the transfer of endogenously produced octanoic acid from octanoyl-acyl-carrier-protein onto the lipoyl domains of lipoate-dependent enzymes. Lipoyl-ACP can also act as a substrate although octanoyl-ACP is likely to be the physiological substrate.</text>
</comment>
<comment type="catalytic activity">
    <reaction evidence="1">
        <text>octanoyl-[ACP] + L-lysyl-[protein] = N(6)-octanoyl-L-lysyl-[protein] + holo-[ACP] + H(+)</text>
        <dbReference type="Rhea" id="RHEA:17665"/>
        <dbReference type="Rhea" id="RHEA-COMP:9636"/>
        <dbReference type="Rhea" id="RHEA-COMP:9685"/>
        <dbReference type="Rhea" id="RHEA-COMP:9752"/>
        <dbReference type="Rhea" id="RHEA-COMP:9928"/>
        <dbReference type="ChEBI" id="CHEBI:15378"/>
        <dbReference type="ChEBI" id="CHEBI:29969"/>
        <dbReference type="ChEBI" id="CHEBI:64479"/>
        <dbReference type="ChEBI" id="CHEBI:78463"/>
        <dbReference type="ChEBI" id="CHEBI:78809"/>
        <dbReference type="EC" id="2.3.1.181"/>
    </reaction>
</comment>
<comment type="pathway">
    <text evidence="1">Protein modification; protein lipoylation via endogenous pathway; protein N(6)-(lipoyl)lysine from octanoyl-[acyl-carrier-protein]: step 1/2.</text>
</comment>
<comment type="subcellular location">
    <subcellularLocation>
        <location evidence="1">Cytoplasm</location>
    </subcellularLocation>
</comment>
<comment type="miscellaneous">
    <text evidence="1">In the reaction, the free carboxyl group of octanoic acid is attached via an amide linkage to the epsilon-amino group of a specific lysine residue of lipoyl domains of lipoate-dependent enzymes.</text>
</comment>
<comment type="similarity">
    <text evidence="1">Belongs to the LipB family.</text>
</comment>
<dbReference type="EC" id="2.3.1.181" evidence="1"/>
<dbReference type="EMBL" id="CP001043">
    <property type="protein sequence ID" value="ACC69409.1"/>
    <property type="molecule type" value="Genomic_DNA"/>
</dbReference>
<dbReference type="RefSeq" id="WP_012399638.1">
    <property type="nucleotide sequence ID" value="NC_010622.1"/>
</dbReference>
<dbReference type="SMR" id="B2JC45"/>
<dbReference type="STRING" id="391038.Bphy_0216"/>
<dbReference type="KEGG" id="bph:Bphy_0216"/>
<dbReference type="eggNOG" id="COG0321">
    <property type="taxonomic scope" value="Bacteria"/>
</dbReference>
<dbReference type="HOGENOM" id="CLU_035168_3_1_4"/>
<dbReference type="OrthoDB" id="9787061at2"/>
<dbReference type="UniPathway" id="UPA00538">
    <property type="reaction ID" value="UER00592"/>
</dbReference>
<dbReference type="Proteomes" id="UP000001192">
    <property type="component" value="Chromosome 1"/>
</dbReference>
<dbReference type="GO" id="GO:0005737">
    <property type="term" value="C:cytoplasm"/>
    <property type="evidence" value="ECO:0007669"/>
    <property type="project" value="UniProtKB-SubCell"/>
</dbReference>
<dbReference type="GO" id="GO:0033819">
    <property type="term" value="F:lipoyl(octanoyl) transferase activity"/>
    <property type="evidence" value="ECO:0007669"/>
    <property type="project" value="UniProtKB-EC"/>
</dbReference>
<dbReference type="GO" id="GO:0036211">
    <property type="term" value="P:protein modification process"/>
    <property type="evidence" value="ECO:0007669"/>
    <property type="project" value="InterPro"/>
</dbReference>
<dbReference type="CDD" id="cd16444">
    <property type="entry name" value="LipB"/>
    <property type="match status" value="1"/>
</dbReference>
<dbReference type="FunFam" id="3.30.930.10:FF:000020">
    <property type="entry name" value="Octanoyltransferase"/>
    <property type="match status" value="1"/>
</dbReference>
<dbReference type="Gene3D" id="3.30.930.10">
    <property type="entry name" value="Bira Bifunctional Protein, Domain 2"/>
    <property type="match status" value="1"/>
</dbReference>
<dbReference type="HAMAP" id="MF_00013">
    <property type="entry name" value="LipB"/>
    <property type="match status" value="1"/>
</dbReference>
<dbReference type="InterPro" id="IPR045864">
    <property type="entry name" value="aa-tRNA-synth_II/BPL/LPL"/>
</dbReference>
<dbReference type="InterPro" id="IPR004143">
    <property type="entry name" value="BPL_LPL_catalytic"/>
</dbReference>
<dbReference type="InterPro" id="IPR000544">
    <property type="entry name" value="Octanoyltransferase"/>
</dbReference>
<dbReference type="InterPro" id="IPR020605">
    <property type="entry name" value="Octanoyltransferase_CS"/>
</dbReference>
<dbReference type="NCBIfam" id="TIGR00214">
    <property type="entry name" value="lipB"/>
    <property type="match status" value="1"/>
</dbReference>
<dbReference type="NCBIfam" id="NF010922">
    <property type="entry name" value="PRK14342.1"/>
    <property type="match status" value="1"/>
</dbReference>
<dbReference type="NCBIfam" id="NF010923">
    <property type="entry name" value="PRK14343.1"/>
    <property type="match status" value="1"/>
</dbReference>
<dbReference type="PANTHER" id="PTHR10993:SF7">
    <property type="entry name" value="LIPOYLTRANSFERASE 2, MITOCHONDRIAL-RELATED"/>
    <property type="match status" value="1"/>
</dbReference>
<dbReference type="PANTHER" id="PTHR10993">
    <property type="entry name" value="OCTANOYLTRANSFERASE"/>
    <property type="match status" value="1"/>
</dbReference>
<dbReference type="Pfam" id="PF21948">
    <property type="entry name" value="LplA-B_cat"/>
    <property type="match status" value="1"/>
</dbReference>
<dbReference type="PIRSF" id="PIRSF016262">
    <property type="entry name" value="LPLase"/>
    <property type="match status" value="1"/>
</dbReference>
<dbReference type="SUPFAM" id="SSF55681">
    <property type="entry name" value="Class II aaRS and biotin synthetases"/>
    <property type="match status" value="1"/>
</dbReference>
<dbReference type="PROSITE" id="PS51733">
    <property type="entry name" value="BPL_LPL_CATALYTIC"/>
    <property type="match status" value="1"/>
</dbReference>
<dbReference type="PROSITE" id="PS01313">
    <property type="entry name" value="LIPB"/>
    <property type="match status" value="1"/>
</dbReference>
<gene>
    <name evidence="1" type="primary">lipB</name>
    <name type="ordered locus">Bphy_0216</name>
</gene>
<keyword id="KW-0012">Acyltransferase</keyword>
<keyword id="KW-0963">Cytoplasm</keyword>
<keyword id="KW-1185">Reference proteome</keyword>
<keyword id="KW-0808">Transferase</keyword>
<organism>
    <name type="scientific">Paraburkholderia phymatum (strain DSM 17167 / CIP 108236 / LMG 21445 / STM815)</name>
    <name type="common">Burkholderia phymatum</name>
    <dbReference type="NCBI Taxonomy" id="391038"/>
    <lineage>
        <taxon>Bacteria</taxon>
        <taxon>Pseudomonadati</taxon>
        <taxon>Pseudomonadota</taxon>
        <taxon>Betaproteobacteria</taxon>
        <taxon>Burkholderiales</taxon>
        <taxon>Burkholderiaceae</taxon>
        <taxon>Paraburkholderia</taxon>
    </lineage>
</organism>
<sequence length="255" mass="26578">MCATPVSPSPESPRSAQAGAAASDAAAQPVIVRWRGLEDYQASFDAMRAFTGSRSFETSDEIWLVEHPPVFTLGQAGDPAHLLAADSGIPLVKVDRGGQITYHGPGQVVGYLLLDLRRRKLMVRELVTRIEQAVIDTLAAYNLAGERKAGAPGIYVSPEQPNAGLHAGAKIAALGLKIRNGCSYHGVSLNVKMDLQPFLAINPCGYAGLETVDMATLGVAAGWDDVAQTLAASLIANIDGIPAAVGLPQAGAITA</sequence>
<evidence type="ECO:0000255" key="1">
    <source>
        <dbReference type="HAMAP-Rule" id="MF_00013"/>
    </source>
</evidence>
<evidence type="ECO:0000255" key="2">
    <source>
        <dbReference type="PROSITE-ProRule" id="PRU01067"/>
    </source>
</evidence>
<evidence type="ECO:0000256" key="3">
    <source>
        <dbReference type="SAM" id="MobiDB-lite"/>
    </source>
</evidence>
<feature type="chain" id="PRO_1000089446" description="Octanoyltransferase">
    <location>
        <begin position="1"/>
        <end position="255"/>
    </location>
</feature>
<feature type="domain" description="BPL/LPL catalytic" evidence="2">
    <location>
        <begin position="56"/>
        <end position="242"/>
    </location>
</feature>
<feature type="region of interest" description="Disordered" evidence="3">
    <location>
        <begin position="1"/>
        <end position="21"/>
    </location>
</feature>
<feature type="active site" description="Acyl-thioester intermediate" evidence="1">
    <location>
        <position position="204"/>
    </location>
</feature>
<feature type="binding site" evidence="1">
    <location>
        <begin position="96"/>
        <end position="103"/>
    </location>
    <ligand>
        <name>substrate</name>
    </ligand>
</feature>
<feature type="binding site" evidence="1">
    <location>
        <begin position="173"/>
        <end position="175"/>
    </location>
    <ligand>
        <name>substrate</name>
    </ligand>
</feature>
<feature type="binding site" evidence="1">
    <location>
        <begin position="186"/>
        <end position="188"/>
    </location>
    <ligand>
        <name>substrate</name>
    </ligand>
</feature>
<feature type="site" description="Lowers pKa of active site Cys" evidence="1">
    <location>
        <position position="170"/>
    </location>
</feature>
<name>LIPB_PARP8</name>